<reference key="1">
    <citation type="journal article" date="2007" name="Science">
        <title>The Fusarium graminearum genome reveals a link between localized polymorphism and pathogen specialization.</title>
        <authorList>
            <person name="Cuomo C.A."/>
            <person name="Gueldener U."/>
            <person name="Xu J.-R."/>
            <person name="Trail F."/>
            <person name="Turgeon B.G."/>
            <person name="Di Pietro A."/>
            <person name="Walton J.D."/>
            <person name="Ma L.-J."/>
            <person name="Baker S.E."/>
            <person name="Rep M."/>
            <person name="Adam G."/>
            <person name="Antoniw J."/>
            <person name="Baldwin T."/>
            <person name="Calvo S.E."/>
            <person name="Chang Y.-L."/>
            <person name="DeCaprio D."/>
            <person name="Gale L.R."/>
            <person name="Gnerre S."/>
            <person name="Goswami R.S."/>
            <person name="Hammond-Kosack K."/>
            <person name="Harris L.J."/>
            <person name="Hilburn K."/>
            <person name="Kennell J.C."/>
            <person name="Kroken S."/>
            <person name="Magnuson J.K."/>
            <person name="Mannhaupt G."/>
            <person name="Mauceli E.W."/>
            <person name="Mewes H.-W."/>
            <person name="Mitterbauer R."/>
            <person name="Muehlbauer G."/>
            <person name="Muensterkoetter M."/>
            <person name="Nelson D."/>
            <person name="O'Donnell K."/>
            <person name="Ouellet T."/>
            <person name="Qi W."/>
            <person name="Quesneville H."/>
            <person name="Roncero M.I.G."/>
            <person name="Seong K.-Y."/>
            <person name="Tetko I.V."/>
            <person name="Urban M."/>
            <person name="Waalwijk C."/>
            <person name="Ward T.J."/>
            <person name="Yao J."/>
            <person name="Birren B.W."/>
            <person name="Kistler H.C."/>
        </authorList>
    </citation>
    <scope>NUCLEOTIDE SEQUENCE [LARGE SCALE GENOMIC DNA]</scope>
    <source>
        <strain>ATCC MYA-4620 / CBS 123657 / FGSC 9075 / NRRL 31084 / PH-1</strain>
    </source>
</reference>
<reference key="2">
    <citation type="journal article" date="2010" name="Nature">
        <title>Comparative genomics reveals mobile pathogenicity chromosomes in Fusarium.</title>
        <authorList>
            <person name="Ma L.-J."/>
            <person name="van der Does H.C."/>
            <person name="Borkovich K.A."/>
            <person name="Coleman J.J."/>
            <person name="Daboussi M.-J."/>
            <person name="Di Pietro A."/>
            <person name="Dufresne M."/>
            <person name="Freitag M."/>
            <person name="Grabherr M."/>
            <person name="Henrissat B."/>
            <person name="Houterman P.M."/>
            <person name="Kang S."/>
            <person name="Shim W.-B."/>
            <person name="Woloshuk C."/>
            <person name="Xie X."/>
            <person name="Xu J.-R."/>
            <person name="Antoniw J."/>
            <person name="Baker S.E."/>
            <person name="Bluhm B.H."/>
            <person name="Breakspear A."/>
            <person name="Brown D.W."/>
            <person name="Butchko R.A.E."/>
            <person name="Chapman S."/>
            <person name="Coulson R."/>
            <person name="Coutinho P.M."/>
            <person name="Danchin E.G.J."/>
            <person name="Diener A."/>
            <person name="Gale L.R."/>
            <person name="Gardiner D.M."/>
            <person name="Goff S."/>
            <person name="Hammond-Kosack K.E."/>
            <person name="Hilburn K."/>
            <person name="Hua-Van A."/>
            <person name="Jonkers W."/>
            <person name="Kazan K."/>
            <person name="Kodira C.D."/>
            <person name="Koehrsen M."/>
            <person name="Kumar L."/>
            <person name="Lee Y.-H."/>
            <person name="Li L."/>
            <person name="Manners J.M."/>
            <person name="Miranda-Saavedra D."/>
            <person name="Mukherjee M."/>
            <person name="Park G."/>
            <person name="Park J."/>
            <person name="Park S.-Y."/>
            <person name="Proctor R.H."/>
            <person name="Regev A."/>
            <person name="Ruiz-Roldan M.C."/>
            <person name="Sain D."/>
            <person name="Sakthikumar S."/>
            <person name="Sykes S."/>
            <person name="Schwartz D.C."/>
            <person name="Turgeon B.G."/>
            <person name="Wapinski I."/>
            <person name="Yoder O."/>
            <person name="Young S."/>
            <person name="Zeng Q."/>
            <person name="Zhou S."/>
            <person name="Galagan J."/>
            <person name="Cuomo C.A."/>
            <person name="Kistler H.C."/>
            <person name="Rep M."/>
        </authorList>
    </citation>
    <scope>GENOME REANNOTATION</scope>
    <source>
        <strain>ATCC MYA-4620 / CBS 123657 / FGSC 9075 / NRRL 31084 / PH-1</strain>
    </source>
</reference>
<reference key="3">
    <citation type="journal article" date="2015" name="BMC Genomics">
        <title>The completed genome sequence of the pathogenic ascomycete fungus Fusarium graminearum.</title>
        <authorList>
            <person name="King R."/>
            <person name="Urban M."/>
            <person name="Hammond-Kosack M.C.U."/>
            <person name="Hassani-Pak K."/>
            <person name="Hammond-Kosack K.E."/>
        </authorList>
    </citation>
    <scope>NUCLEOTIDE SEQUENCE [LARGE SCALE GENOMIC DNA]</scope>
    <source>
        <strain>ATCC MYA-4620 / CBS 123657 / FGSC 9075 / NRRL 31084 / PH-1</strain>
    </source>
</reference>
<reference key="4">
    <citation type="journal article" date="2010" name="Appl. Environ. Microbiol.">
        <title>CLM1 of Fusarium graminearum encodes a longiborneol synthase required for culmorin production.</title>
        <authorList>
            <person name="McCormick S.P."/>
            <person name="Alexander N.J."/>
            <person name="Harris L.J."/>
        </authorList>
    </citation>
    <scope>FUNCTION</scope>
    <scope>INDUCTION</scope>
    <scope>DISRUPTION PHENOTYPE</scope>
    <scope>CATALYTIC ACTIVITY</scope>
    <scope>PATHWAY</scope>
</reference>
<reference key="5">
    <citation type="journal article" date="2016" name="J. Mol. Model.">
        <title>Structure-based virtual screening of hypothetical inhibitors of the enzyme longiborneol synthase-a potential target to reduce Fusarium head blight disease.</title>
        <authorList>
            <person name="Bresso E."/>
            <person name="Leroux V."/>
            <person name="Urban M."/>
            <person name="Hammond-Kosack K.E."/>
            <person name="Maigret B."/>
            <person name="Martins N.F."/>
        </authorList>
    </citation>
    <scope>3D-STRUCTURE MODELING</scope>
    <scope>DOMAIN</scope>
    <scope>FUNCTION</scope>
    <scope>BIOTECHNOLOGY</scope>
</reference>
<reference key="6">
    <citation type="journal article" date="2016" name="J. Nat. Prod.">
        <title>Hydroxylation of Longiborneol by a Clm2-Encoded CYP450 Monooxygenase to Produce Culmorin in Fusarium graminearum.</title>
        <authorList>
            <person name="Bahadoor A."/>
            <person name="Schneiderman D."/>
            <person name="Gemmill L."/>
            <person name="Bosnich W."/>
            <person name="Blackwell B."/>
            <person name="Melanson J.E."/>
            <person name="McRae G."/>
            <person name="Harris L.J."/>
        </authorList>
    </citation>
    <scope>FUNCTION</scope>
</reference>
<dbReference type="EC" id="4.2.3.-" evidence="3"/>
<dbReference type="EMBL" id="HG970332">
    <property type="protein sequence ID" value="CEF75803.1"/>
    <property type="molecule type" value="Genomic_DNA"/>
</dbReference>
<dbReference type="RefSeq" id="XP_011319367.1">
    <property type="nucleotide sequence ID" value="XM_011321065.1"/>
</dbReference>
<dbReference type="PDB" id="8H4P">
    <property type="method" value="X-ray"/>
    <property type="resolution" value="1.47 A"/>
    <property type="chains" value="A/B=1-339"/>
</dbReference>
<dbReference type="PDBsum" id="8H4P"/>
<dbReference type="SMR" id="I1S104"/>
<dbReference type="STRING" id="229533.I1S104"/>
<dbReference type="KEGG" id="fgr:FGSG_10397"/>
<dbReference type="VEuPathDB" id="FungiDB:FGRAMPH1_01G07999"/>
<dbReference type="eggNOG" id="ENOG502SQ3X">
    <property type="taxonomic scope" value="Eukaryota"/>
</dbReference>
<dbReference type="HOGENOM" id="CLU_052212_0_2_1"/>
<dbReference type="InParanoid" id="I1S104"/>
<dbReference type="OrthoDB" id="63926at110618"/>
<dbReference type="PHI-base" id="PHI:2394"/>
<dbReference type="Proteomes" id="UP000070720">
    <property type="component" value="Chromosome 1"/>
</dbReference>
<dbReference type="GO" id="GO:0016838">
    <property type="term" value="F:carbon-oxygen lyase activity, acting on phosphates"/>
    <property type="evidence" value="ECO:0007669"/>
    <property type="project" value="InterPro"/>
</dbReference>
<dbReference type="GO" id="GO:0046872">
    <property type="term" value="F:metal ion binding"/>
    <property type="evidence" value="ECO:0007669"/>
    <property type="project" value="UniProtKB-KW"/>
</dbReference>
<dbReference type="Gene3D" id="1.10.600.10">
    <property type="entry name" value="Farnesyl Diphosphate Synthase"/>
    <property type="match status" value="1"/>
</dbReference>
<dbReference type="InterPro" id="IPR008949">
    <property type="entry name" value="Isoprenoid_synthase_dom_sf"/>
</dbReference>
<dbReference type="InterPro" id="IPR024652">
    <property type="entry name" value="Trichodiene_synth"/>
</dbReference>
<dbReference type="Pfam" id="PF06330">
    <property type="entry name" value="TRI5"/>
    <property type="match status" value="1"/>
</dbReference>
<dbReference type="SFLD" id="SFLDS00005">
    <property type="entry name" value="Isoprenoid_Synthase_Type_I"/>
    <property type="match status" value="1"/>
</dbReference>
<dbReference type="SFLD" id="SFLDG01021">
    <property type="entry name" value="Trichodiene_Synthase_Like"/>
    <property type="match status" value="1"/>
</dbReference>
<dbReference type="SUPFAM" id="SSF48576">
    <property type="entry name" value="Terpenoid synthases"/>
    <property type="match status" value="1"/>
</dbReference>
<protein>
    <recommendedName>
        <fullName evidence="6">Longiborneol synthase CLM1</fullName>
        <ecNumber evidence="3">4.2.3.-</ecNumber>
    </recommendedName>
    <alternativeName>
        <fullName evidence="6">Culmorin biosynthesis protein 1</fullName>
    </alternativeName>
    <alternativeName>
        <fullName evidence="6">Terpene cyclase CLM1</fullName>
    </alternativeName>
</protein>
<name>CLM1_GIBZE</name>
<proteinExistence type="evidence at protein level"/>
<sequence length="339" mass="38419">MLATPTLSNFDKPSLPSSEGGDPALAARLQPLYSRFLTDLDLQPEYRRHESEKLMEEVLKFAKSTGVPHDLNSHSYQSLMVGYTYADNCLPYHDIEVKVYVAIYTWLATICDDAEALGIIDDVQLFEQRFILGEEQPTVLLRAFADQLKLTYKLYHPLVANLILCSSLNLLTSTSLVARKGIKEKGDHPSKGGNYFAWYIRERDGVGEAYSWFTFPKRQFPNLDIPIEAIEDMTRFIAYLNDVLSFYKESLAGETHNYINHTAAYEGVDSDAALHKTAQDTIDCARRIESVLAGKGEYEKAWRLHASGYLQMHVQRGRYRLIEVGVGDAPDVHEVIKKI</sequence>
<feature type="chain" id="PRO_0000444957" description="Longiborneol synthase CLM1">
    <location>
        <begin position="1"/>
        <end position="339"/>
    </location>
</feature>
<feature type="region of interest" description="Disordered" evidence="2">
    <location>
        <begin position="1"/>
        <end position="21"/>
    </location>
</feature>
<feature type="short sequence motif" description="NDXXSXXXE magnesium-binding motif" evidence="9">
    <location>
        <begin position="241"/>
        <end position="249"/>
    </location>
</feature>
<feature type="compositionally biased region" description="Polar residues" evidence="2">
    <location>
        <begin position="1"/>
        <end position="17"/>
    </location>
</feature>
<feature type="binding site" evidence="1">
    <location>
        <position position="112"/>
    </location>
    <ligand>
        <name>Mg(2+)</name>
        <dbReference type="ChEBI" id="CHEBI:18420"/>
        <label>1</label>
    </ligand>
</feature>
<feature type="binding site" evidence="1">
    <location>
        <position position="241"/>
    </location>
    <ligand>
        <name>Mg(2+)</name>
        <dbReference type="ChEBI" id="CHEBI:18420"/>
        <label>2</label>
    </ligand>
</feature>
<feature type="binding site" evidence="1">
    <location>
        <position position="245"/>
    </location>
    <ligand>
        <name>Mg(2+)</name>
        <dbReference type="ChEBI" id="CHEBI:18420"/>
        <label>2</label>
    </ligand>
</feature>
<feature type="binding site" evidence="1">
    <location>
        <position position="249"/>
    </location>
    <ligand>
        <name>Mg(2+)</name>
        <dbReference type="ChEBI" id="CHEBI:18420"/>
        <label>2</label>
    </ligand>
</feature>
<evidence type="ECO:0000250" key="1">
    <source>
        <dbReference type="UniProtKB" id="P13513"/>
    </source>
</evidence>
<evidence type="ECO:0000256" key="2">
    <source>
        <dbReference type="SAM" id="MobiDB-lite"/>
    </source>
</evidence>
<evidence type="ECO:0000269" key="3">
    <source>
    </source>
</evidence>
<evidence type="ECO:0000269" key="4">
    <source>
    </source>
</evidence>
<evidence type="ECO:0000269" key="5">
    <source>
    </source>
</evidence>
<evidence type="ECO:0000303" key="6">
    <source>
    </source>
</evidence>
<evidence type="ECO:0000305" key="7"/>
<evidence type="ECO:0000305" key="8">
    <source>
    </source>
</evidence>
<evidence type="ECO:0000305" key="9">
    <source>
    </source>
</evidence>
<gene>
    <name evidence="6" type="primary">CLM1</name>
    <name type="ORF">FG10397</name>
    <name type="ORF">FGRAMPH1_01T07999</name>
</gene>
<accession>I1S104</accession>
<comment type="function">
    <text evidence="3 4 9">Terpene cyclase involved in the biosynthesis of culmorin, a tricyclic sesquiterpene diol reported to have antifungal activity and some phytotoxicity to wheat coleoptile tissue, contributing to Fusarium head blight disease (Probable) (PubMed:19880637). The terpene cyclase CLM1 is responsible for the cyclization of farnesyl diphosphate into the intermediate longiborneol (PubMed:19880637). Longiborneol is then hydroxylated in a regio- and endo-stereoselective manner at position C-11 by the cytochrome P450 monooxygenase CLM2 to produce culmorin (PubMed:26673640). Additional non-specific oxygenases are also able to hydroxylate longiborneol at other sites than C-11 leading to 3-hydroxylongiborneol, 5-hydroxylongiborneol, 12-hydroxylongiborneol and 15-hydroxylongiborneol (PubMed:26673640). Moreover, another oxygenase capable of installing a C-11 exo-hydroxy group in longiborneol can also yield 11-epi-acetylculmorin (PubMed:26673640). The production of these longiborneol derivatives is dwarfed by the high abundance of culmorin, suggesting that CLM2 displays superior enzymatic activity to the unidentified, possibly promiscuous, additional oxygenases (PubMed:26673640).</text>
</comment>
<comment type="catalytic activity">
    <reaction evidence="3">
        <text>(2E,6E)-farnesyl diphosphate + H2O = (-)-longiborneol + diphosphate</text>
        <dbReference type="Rhea" id="RHEA:83907"/>
        <dbReference type="ChEBI" id="CHEBI:15377"/>
        <dbReference type="ChEBI" id="CHEBI:33019"/>
        <dbReference type="ChEBI" id="CHEBI:175763"/>
        <dbReference type="ChEBI" id="CHEBI:233473"/>
    </reaction>
    <physiologicalReaction direction="left-to-right" evidence="8">
        <dbReference type="Rhea" id="RHEA:83908"/>
    </physiologicalReaction>
</comment>
<comment type="cofactor">
    <cofactor evidence="1">
        <name>Mg(2+)</name>
        <dbReference type="ChEBI" id="CHEBI:18420"/>
    </cofactor>
    <cofactor evidence="1">
        <name>Mn(2+)</name>
        <dbReference type="ChEBI" id="CHEBI:29035"/>
    </cofactor>
</comment>
<comment type="pathway">
    <text evidence="3">Mycotoxin biosynthesis.</text>
</comment>
<comment type="induction">
    <text evidence="3">Expressed under trichothecene-inducing conditions.</text>
</comment>
<comment type="disruption phenotype">
    <text evidence="3">Leads to complete loss of culmorin production (PubMed:19880637). Does not affect the trichothecene biosynthetic pathway since 15-acetyldeoxynivalenol (15ADON) is still produced (PubMed:19880637). Keeps the ability to convert exogenously added longiborneol to culmorin (PubMed:19880637).</text>
</comment>
<comment type="biotechnology">
    <text evidence="5">Longiborneol synthase CLM1 is a potential target to reduce Fusarium head blight disease. 3D-structure modeling based on known 3D-structure of losely related enzymes has been used for screening of hypothetical inhibitors of CLM1 catalytic activity.</text>
</comment>
<comment type="similarity">
    <text evidence="7">Belongs to the trichodiene synthase family.</text>
</comment>
<organism>
    <name type="scientific">Gibberella zeae (strain ATCC MYA-4620 / CBS 123657 / FGSC 9075 / NRRL 31084 / PH-1)</name>
    <name type="common">Wheat head blight fungus</name>
    <name type="synonym">Fusarium graminearum</name>
    <dbReference type="NCBI Taxonomy" id="229533"/>
    <lineage>
        <taxon>Eukaryota</taxon>
        <taxon>Fungi</taxon>
        <taxon>Dikarya</taxon>
        <taxon>Ascomycota</taxon>
        <taxon>Pezizomycotina</taxon>
        <taxon>Sordariomycetes</taxon>
        <taxon>Hypocreomycetidae</taxon>
        <taxon>Hypocreales</taxon>
        <taxon>Nectriaceae</taxon>
        <taxon>Fusarium</taxon>
    </lineage>
</organism>
<keyword id="KW-0002">3D-structure</keyword>
<keyword id="KW-0456">Lyase</keyword>
<keyword id="KW-0460">Magnesium</keyword>
<keyword id="KW-0479">Metal-binding</keyword>
<keyword id="KW-1185">Reference proteome</keyword>
<keyword id="KW-0843">Virulence</keyword>